<protein>
    <recommendedName>
        <fullName>Sporulation kinase D</fullName>
        <ecNumber>2.7.13.3</ecNumber>
    </recommendedName>
    <alternativeName>
        <fullName>Sensor histidine kinase D</fullName>
    </alternativeName>
</protein>
<comment type="function">
    <text evidence="4 5 6">Phosphorylates the sporulation-regulatory protein spo0F and, to a minor extent, is responsible for heterogeneous expression of spo0A during logarithmical growth. Also phosphorylates spo0A under biofilm growth conditions.</text>
</comment>
<comment type="catalytic activity">
    <reaction>
        <text>ATP + protein L-histidine = ADP + protein N-phospho-L-histidine.</text>
        <dbReference type="EC" id="2.7.13.3"/>
    </reaction>
</comment>
<comment type="subunit">
    <text evidence="7">Oligomerizes, probably forms homodimers; oligomerization is assisted by FloT. Interacts with FloT.</text>
</comment>
<comment type="subcellular location">
    <subcellularLocation>
        <location evidence="8">Cell membrane</location>
        <topology evidence="8">Multi-pass membrane protein</topology>
    </subcellularLocation>
</comment>
<comment type="induction">
    <text evidence="4">Expressed during growth and early stationary phase.</text>
</comment>
<comment type="disruption phenotype">
    <text evidence="3">Cells lacking this gene sporulate normally in spo0F mutants.</text>
</comment>
<proteinExistence type="evidence at protein level"/>
<evidence type="ECO:0000255" key="1"/>
<evidence type="ECO:0000255" key="2">
    <source>
        <dbReference type="PROSITE-ProRule" id="PRU00107"/>
    </source>
</evidence>
<evidence type="ECO:0000269" key="3">
    <source>
    </source>
</evidence>
<evidence type="ECO:0000269" key="4">
    <source>
    </source>
</evidence>
<evidence type="ECO:0000269" key="5">
    <source>
    </source>
</evidence>
<evidence type="ECO:0000269" key="6">
    <source>
    </source>
</evidence>
<evidence type="ECO:0000269" key="7">
    <source>
    </source>
</evidence>
<evidence type="ECO:0000305" key="8"/>
<evidence type="ECO:0007829" key="9">
    <source>
        <dbReference type="PDB" id="4JGP"/>
    </source>
</evidence>
<organism>
    <name type="scientific">Bacillus subtilis (strain 168)</name>
    <dbReference type="NCBI Taxonomy" id="224308"/>
    <lineage>
        <taxon>Bacteria</taxon>
        <taxon>Bacillati</taxon>
        <taxon>Bacillota</taxon>
        <taxon>Bacilli</taxon>
        <taxon>Bacillales</taxon>
        <taxon>Bacillaceae</taxon>
        <taxon>Bacillus</taxon>
    </lineage>
</organism>
<accession>O31671</accession>
<reference key="1">
    <citation type="journal article" date="1997" name="Nature">
        <title>The complete genome sequence of the Gram-positive bacterium Bacillus subtilis.</title>
        <authorList>
            <person name="Kunst F."/>
            <person name="Ogasawara N."/>
            <person name="Moszer I."/>
            <person name="Albertini A.M."/>
            <person name="Alloni G."/>
            <person name="Azevedo V."/>
            <person name="Bertero M.G."/>
            <person name="Bessieres P."/>
            <person name="Bolotin A."/>
            <person name="Borchert S."/>
            <person name="Borriss R."/>
            <person name="Boursier L."/>
            <person name="Brans A."/>
            <person name="Braun M."/>
            <person name="Brignell S.C."/>
            <person name="Bron S."/>
            <person name="Brouillet S."/>
            <person name="Bruschi C.V."/>
            <person name="Caldwell B."/>
            <person name="Capuano V."/>
            <person name="Carter N.M."/>
            <person name="Choi S.-K."/>
            <person name="Codani J.-J."/>
            <person name="Connerton I.F."/>
            <person name="Cummings N.J."/>
            <person name="Daniel R.A."/>
            <person name="Denizot F."/>
            <person name="Devine K.M."/>
            <person name="Duesterhoeft A."/>
            <person name="Ehrlich S.D."/>
            <person name="Emmerson P.T."/>
            <person name="Entian K.-D."/>
            <person name="Errington J."/>
            <person name="Fabret C."/>
            <person name="Ferrari E."/>
            <person name="Foulger D."/>
            <person name="Fritz C."/>
            <person name="Fujita M."/>
            <person name="Fujita Y."/>
            <person name="Fuma S."/>
            <person name="Galizzi A."/>
            <person name="Galleron N."/>
            <person name="Ghim S.-Y."/>
            <person name="Glaser P."/>
            <person name="Goffeau A."/>
            <person name="Golightly E.J."/>
            <person name="Grandi G."/>
            <person name="Guiseppi G."/>
            <person name="Guy B.J."/>
            <person name="Haga K."/>
            <person name="Haiech J."/>
            <person name="Harwood C.R."/>
            <person name="Henaut A."/>
            <person name="Hilbert H."/>
            <person name="Holsappel S."/>
            <person name="Hosono S."/>
            <person name="Hullo M.-F."/>
            <person name="Itaya M."/>
            <person name="Jones L.-M."/>
            <person name="Joris B."/>
            <person name="Karamata D."/>
            <person name="Kasahara Y."/>
            <person name="Klaerr-Blanchard M."/>
            <person name="Klein C."/>
            <person name="Kobayashi Y."/>
            <person name="Koetter P."/>
            <person name="Koningstein G."/>
            <person name="Krogh S."/>
            <person name="Kumano M."/>
            <person name="Kurita K."/>
            <person name="Lapidus A."/>
            <person name="Lardinois S."/>
            <person name="Lauber J."/>
            <person name="Lazarevic V."/>
            <person name="Lee S.-M."/>
            <person name="Levine A."/>
            <person name="Liu H."/>
            <person name="Masuda S."/>
            <person name="Mauel C."/>
            <person name="Medigue C."/>
            <person name="Medina N."/>
            <person name="Mellado R.P."/>
            <person name="Mizuno M."/>
            <person name="Moestl D."/>
            <person name="Nakai S."/>
            <person name="Noback M."/>
            <person name="Noone D."/>
            <person name="O'Reilly M."/>
            <person name="Ogawa K."/>
            <person name="Ogiwara A."/>
            <person name="Oudega B."/>
            <person name="Park S.-H."/>
            <person name="Parro V."/>
            <person name="Pohl T.M."/>
            <person name="Portetelle D."/>
            <person name="Porwollik S."/>
            <person name="Prescott A.M."/>
            <person name="Presecan E."/>
            <person name="Pujic P."/>
            <person name="Purnelle B."/>
            <person name="Rapoport G."/>
            <person name="Rey M."/>
            <person name="Reynolds S."/>
            <person name="Rieger M."/>
            <person name="Rivolta C."/>
            <person name="Rocha E."/>
            <person name="Roche B."/>
            <person name="Rose M."/>
            <person name="Sadaie Y."/>
            <person name="Sato T."/>
            <person name="Scanlan E."/>
            <person name="Schleich S."/>
            <person name="Schroeter R."/>
            <person name="Scoffone F."/>
            <person name="Sekiguchi J."/>
            <person name="Sekowska A."/>
            <person name="Seror S.J."/>
            <person name="Serror P."/>
            <person name="Shin B.-S."/>
            <person name="Soldo B."/>
            <person name="Sorokin A."/>
            <person name="Tacconi E."/>
            <person name="Takagi T."/>
            <person name="Takahashi H."/>
            <person name="Takemaru K."/>
            <person name="Takeuchi M."/>
            <person name="Tamakoshi A."/>
            <person name="Tanaka T."/>
            <person name="Terpstra P."/>
            <person name="Tognoni A."/>
            <person name="Tosato V."/>
            <person name="Uchiyama S."/>
            <person name="Vandenbol M."/>
            <person name="Vannier F."/>
            <person name="Vassarotti A."/>
            <person name="Viari A."/>
            <person name="Wambutt R."/>
            <person name="Wedler E."/>
            <person name="Wedler H."/>
            <person name="Weitzenegger T."/>
            <person name="Winters P."/>
            <person name="Wipat A."/>
            <person name="Yamamoto H."/>
            <person name="Yamane K."/>
            <person name="Yasumoto K."/>
            <person name="Yata K."/>
            <person name="Yoshida K."/>
            <person name="Yoshikawa H.-F."/>
            <person name="Zumstein E."/>
            <person name="Yoshikawa H."/>
            <person name="Danchin A."/>
        </authorList>
    </citation>
    <scope>NUCLEOTIDE SEQUENCE [LARGE SCALE GENOMIC DNA]</scope>
    <source>
        <strain>168</strain>
    </source>
</reference>
<reference key="2">
    <citation type="journal article" date="1999" name="Mol. Microbiol.">
        <title>Alanine mutants of the Spo0F response regulator modifying specificity for sensor kinases in sporulation initiation.</title>
        <authorList>
            <person name="Jiang M."/>
            <person name="Tzeng Y.-L."/>
            <person name="Feher V.A."/>
            <person name="Perego M."/>
            <person name="Hoch J.A."/>
        </authorList>
    </citation>
    <scope>DISRUPTION PHENOTYPE</scope>
    <source>
        <strain>168 / JH642</strain>
    </source>
</reference>
<reference key="3">
    <citation type="journal article" date="2000" name="Mol. Microbiol.">
        <title>Multiple histidine kinases regulate entry into stationary phase and sporulation in Bacillus subtilis.</title>
        <authorList>
            <person name="Jiang M."/>
            <person name="Shao W."/>
            <person name="Perego M."/>
            <person name="Hoch J.A."/>
        </authorList>
    </citation>
    <scope>FUNCTION IN PHOSPHORYLATING SPO0F</scope>
    <scope>INDUCTION</scope>
    <source>
        <strain>168 / JH642</strain>
    </source>
</reference>
<reference key="4">
    <citation type="journal article" date="2001" name="Mol. Microbiol.">
        <title>The sporulation transcription factor Spo0A is required for biofilm development in Bacillus subtilis.</title>
        <authorList>
            <person name="Hamon M.A."/>
            <person name="Lazazzera B.A."/>
        </authorList>
    </citation>
    <scope>FUNCTION IN PHOSPHORYLATING SPO0A</scope>
    <source>
        <strain>168 / JH642</strain>
    </source>
</reference>
<reference key="5">
    <citation type="journal article" date="2008" name="Mol. Microbiol.">
        <title>kinC/D-mediated heterogeneous expression of spo0A during logarithmical growth in Bacillus subtilis is responsible for partial suppression of phi 29 development.</title>
        <authorList>
            <person name="Castilla-Llorente V."/>
            <person name="Salas M."/>
            <person name="Meijer W.J.J."/>
        </authorList>
    </citation>
    <scope>FUNCTION IN PHOSPHORYLATING SPO0A</scope>
    <source>
        <strain>168 / JH642</strain>
    </source>
</reference>
<reference key="6">
    <citation type="journal article" date="2015" name="Microbiology">
        <title>In vivo characterization of the scaffold activity of flotillin on the membrane kinase KinC of Bacillus subtilis.</title>
        <authorList>
            <person name="Schneider J."/>
            <person name="Mielich-Suess B."/>
            <person name="Boehme R."/>
            <person name="Lopez D."/>
        </authorList>
    </citation>
    <scope>SUBUNIT</scope>
    <scope>INTERACTION WITH FLOT</scope>
    <source>
        <strain>168 / Marburg / ATCC 6051 / DSM 10 / JCM 1465 / NBRC 13719 / NCIMB 3610 / NRRL NRS-744 / VKM B-501</strain>
    </source>
</reference>
<name>KIND_BACSU</name>
<sequence>MLERCKLKILKGACGRVKLYIILVVIPAIVISFFVYEKEKDTIAAEHKQEASVLLNLHRNKINYLIGETMARMTSLSIAIDRPVDIKKMQSILEKTFDSEPRFSGLYFLNAKGDVTASTTELKTKVNLADRSFFIKAKETKKTVISDSYSSRITGQPIFTICVPVLDSKRNVTDYLVAAIQIDYLKNLINLLSPDVYIEVVNQDGKMIFASGQASHAEDQKPVSGYLDDISWNMKVYPNPVTIEELSKSLVLPLSCIIVLLNILFILVLYYLLKRQTQLERSENEAQKLELIGTLAASTAHEIRNPLTGISGFIQLLQKKYKGEEDQLYFSIIEQEIKRINQIVSEFLVLGKPTAEKWELNSLQDIIGEIMPIIYSEGNLYNVEVELQYLTEQPLLVKCTKDHIKQVILNVAKNGLESMPEGGKLTISLGALDKKAIIKVVDNGEGISQEMLDHIFLPFVTSKEKGTGLGLVVCKRIVLMYGGSIHIESEVRRGTEVTITLPVSAS</sequence>
<gene>
    <name type="primary">kinD</name>
    <name type="synonym">ykvD</name>
    <name type="ordered locus">BSU13660</name>
</gene>
<keyword id="KW-0002">3D-structure</keyword>
<keyword id="KW-0067">ATP-binding</keyword>
<keyword id="KW-1003">Cell membrane</keyword>
<keyword id="KW-0418">Kinase</keyword>
<keyword id="KW-0472">Membrane</keyword>
<keyword id="KW-0547">Nucleotide-binding</keyword>
<keyword id="KW-0597">Phosphoprotein</keyword>
<keyword id="KW-1185">Reference proteome</keyword>
<keyword id="KW-0749">Sporulation</keyword>
<keyword id="KW-0808">Transferase</keyword>
<keyword id="KW-0812">Transmembrane</keyword>
<keyword id="KW-1133">Transmembrane helix</keyword>
<keyword id="KW-0902">Two-component regulatory system</keyword>
<feature type="chain" id="PRO_0000375263" description="Sporulation kinase D">
    <location>
        <begin position="1"/>
        <end position="506"/>
    </location>
</feature>
<feature type="transmembrane region" description="Helical" evidence="1">
    <location>
        <begin position="17"/>
        <end position="37"/>
    </location>
</feature>
<feature type="transmembrane region" description="Helical" evidence="1">
    <location>
        <begin position="250"/>
        <end position="270"/>
    </location>
</feature>
<feature type="domain" description="Histidine kinase" evidence="2">
    <location>
        <begin position="298"/>
        <end position="505"/>
    </location>
</feature>
<feature type="modified residue" description="Phosphohistidine; by autocatalysis" evidence="2">
    <location>
        <position position="301"/>
    </location>
</feature>
<feature type="helix" evidence="9">
    <location>
        <begin position="40"/>
        <end position="79"/>
    </location>
</feature>
<feature type="helix" evidence="9">
    <location>
        <begin position="86"/>
        <end position="97"/>
    </location>
</feature>
<feature type="strand" evidence="9">
    <location>
        <begin position="103"/>
        <end position="110"/>
    </location>
</feature>
<feature type="strand" evidence="9">
    <location>
        <begin position="114"/>
        <end position="120"/>
    </location>
</feature>
<feature type="helix" evidence="9">
    <location>
        <begin position="132"/>
        <end position="140"/>
    </location>
</feature>
<feature type="turn" evidence="9">
    <location>
        <begin position="152"/>
        <end position="154"/>
    </location>
</feature>
<feature type="strand" evidence="9">
    <location>
        <begin position="156"/>
        <end position="166"/>
    </location>
</feature>
<feature type="strand" evidence="9">
    <location>
        <begin position="172"/>
        <end position="181"/>
    </location>
</feature>
<feature type="helix" evidence="9">
    <location>
        <begin position="182"/>
        <end position="192"/>
    </location>
</feature>
<feature type="strand" evidence="9">
    <location>
        <begin position="198"/>
        <end position="202"/>
    </location>
</feature>
<feature type="strand" evidence="9">
    <location>
        <begin position="207"/>
        <end position="212"/>
    </location>
</feature>
<feature type="helix" evidence="9">
    <location>
        <begin position="214"/>
        <end position="217"/>
    </location>
</feature>
<feature type="strand" evidence="9">
    <location>
        <begin position="223"/>
        <end position="226"/>
    </location>
</feature>
<feature type="strand" evidence="9">
    <location>
        <begin position="228"/>
        <end position="230"/>
    </location>
</feature>
<feature type="strand" evidence="9">
    <location>
        <begin position="232"/>
        <end position="236"/>
    </location>
</feature>
<dbReference type="EC" id="2.7.13.3"/>
<dbReference type="EMBL" id="AL009126">
    <property type="protein sequence ID" value="CAB13239.1"/>
    <property type="molecule type" value="Genomic_DNA"/>
</dbReference>
<dbReference type="PIR" id="F69867">
    <property type="entry name" value="F69867"/>
</dbReference>
<dbReference type="RefSeq" id="NP_389249.1">
    <property type="nucleotide sequence ID" value="NC_000964.3"/>
</dbReference>
<dbReference type="RefSeq" id="WP_010886497.1">
    <property type="nucleotide sequence ID" value="NZ_OZ025638.1"/>
</dbReference>
<dbReference type="PDB" id="4JGO">
    <property type="method" value="X-ray"/>
    <property type="resolution" value="2.28 A"/>
    <property type="chains" value="A/B=37-250"/>
</dbReference>
<dbReference type="PDB" id="4JGP">
    <property type="method" value="X-ray"/>
    <property type="resolution" value="2.03 A"/>
    <property type="chains" value="A/B=37-250"/>
</dbReference>
<dbReference type="PDB" id="4JGQ">
    <property type="method" value="X-ray"/>
    <property type="resolution" value="2.63 A"/>
    <property type="chains" value="A/B=37-250"/>
</dbReference>
<dbReference type="PDB" id="4JGR">
    <property type="method" value="X-ray"/>
    <property type="resolution" value="2.40 A"/>
    <property type="chains" value="A/B=37-250"/>
</dbReference>
<dbReference type="PDBsum" id="4JGO"/>
<dbReference type="PDBsum" id="4JGP"/>
<dbReference type="PDBsum" id="4JGQ"/>
<dbReference type="PDBsum" id="4JGR"/>
<dbReference type="SMR" id="O31671"/>
<dbReference type="FunCoup" id="O31671">
    <property type="interactions" value="123"/>
</dbReference>
<dbReference type="STRING" id="224308.BSU13660"/>
<dbReference type="PaxDb" id="224308-BSU13660"/>
<dbReference type="DNASU" id="939300"/>
<dbReference type="EnsemblBacteria" id="CAB13239">
    <property type="protein sequence ID" value="CAB13239"/>
    <property type="gene ID" value="BSU_13660"/>
</dbReference>
<dbReference type="GeneID" id="939300"/>
<dbReference type="KEGG" id="bsu:BSU13660"/>
<dbReference type="PATRIC" id="fig|224308.43.peg.1442"/>
<dbReference type="eggNOG" id="COG3852">
    <property type="taxonomic scope" value="Bacteria"/>
</dbReference>
<dbReference type="InParanoid" id="O31671"/>
<dbReference type="OrthoDB" id="9815750at2"/>
<dbReference type="PhylomeDB" id="O31671"/>
<dbReference type="BioCyc" id="BSUB:BSU13660-MONOMER"/>
<dbReference type="BRENDA" id="2.7.13.3">
    <property type="organism ID" value="658"/>
</dbReference>
<dbReference type="EvolutionaryTrace" id="O31671"/>
<dbReference type="Proteomes" id="UP000001570">
    <property type="component" value="Chromosome"/>
</dbReference>
<dbReference type="GO" id="GO:0005886">
    <property type="term" value="C:plasma membrane"/>
    <property type="evidence" value="ECO:0007669"/>
    <property type="project" value="UniProtKB-SubCell"/>
</dbReference>
<dbReference type="GO" id="GO:0005524">
    <property type="term" value="F:ATP binding"/>
    <property type="evidence" value="ECO:0007669"/>
    <property type="project" value="UniProtKB-KW"/>
</dbReference>
<dbReference type="GO" id="GO:0000155">
    <property type="term" value="F:phosphorelay sensor kinase activity"/>
    <property type="evidence" value="ECO:0007669"/>
    <property type="project" value="InterPro"/>
</dbReference>
<dbReference type="GO" id="GO:0030435">
    <property type="term" value="P:sporulation resulting in formation of a cellular spore"/>
    <property type="evidence" value="ECO:0007669"/>
    <property type="project" value="UniProtKB-KW"/>
</dbReference>
<dbReference type="CDD" id="cd00075">
    <property type="entry name" value="HATPase"/>
    <property type="match status" value="1"/>
</dbReference>
<dbReference type="CDD" id="cd00082">
    <property type="entry name" value="HisKA"/>
    <property type="match status" value="1"/>
</dbReference>
<dbReference type="CDD" id="cd12914">
    <property type="entry name" value="PDC1_DGC_like"/>
    <property type="match status" value="1"/>
</dbReference>
<dbReference type="FunFam" id="1.10.287.130:FF:000040">
    <property type="entry name" value="PAS domain-containing sensor histidine kinase"/>
    <property type="match status" value="1"/>
</dbReference>
<dbReference type="Gene3D" id="1.10.287.130">
    <property type="match status" value="1"/>
</dbReference>
<dbReference type="Gene3D" id="3.30.565.10">
    <property type="entry name" value="Histidine kinase-like ATPase, C-terminal domain"/>
    <property type="match status" value="1"/>
</dbReference>
<dbReference type="Gene3D" id="3.30.450.20">
    <property type="entry name" value="PAS domain"/>
    <property type="match status" value="2"/>
</dbReference>
<dbReference type="InterPro" id="IPR033479">
    <property type="entry name" value="dCache_1"/>
</dbReference>
<dbReference type="InterPro" id="IPR036890">
    <property type="entry name" value="HATPase_C_sf"/>
</dbReference>
<dbReference type="InterPro" id="IPR005467">
    <property type="entry name" value="His_kinase_dom"/>
</dbReference>
<dbReference type="InterPro" id="IPR003661">
    <property type="entry name" value="HisK_dim/P_dom"/>
</dbReference>
<dbReference type="InterPro" id="IPR036097">
    <property type="entry name" value="HisK_dim/P_sf"/>
</dbReference>
<dbReference type="InterPro" id="IPR029151">
    <property type="entry name" value="Sensor-like_sf"/>
</dbReference>
<dbReference type="InterPro" id="IPR004358">
    <property type="entry name" value="Sig_transdc_His_kin-like_C"/>
</dbReference>
<dbReference type="PANTHER" id="PTHR43065:SF10">
    <property type="entry name" value="PEROXIDE STRESS-ACTIVATED HISTIDINE KINASE MAK3"/>
    <property type="match status" value="1"/>
</dbReference>
<dbReference type="PANTHER" id="PTHR43065">
    <property type="entry name" value="SENSOR HISTIDINE KINASE"/>
    <property type="match status" value="1"/>
</dbReference>
<dbReference type="Pfam" id="PF02743">
    <property type="entry name" value="dCache_1"/>
    <property type="match status" value="1"/>
</dbReference>
<dbReference type="Pfam" id="PF02518">
    <property type="entry name" value="HATPase_c"/>
    <property type="match status" value="1"/>
</dbReference>
<dbReference type="Pfam" id="PF00512">
    <property type="entry name" value="HisKA"/>
    <property type="match status" value="1"/>
</dbReference>
<dbReference type="PRINTS" id="PR00344">
    <property type="entry name" value="BCTRLSENSOR"/>
</dbReference>
<dbReference type="SMART" id="SM00387">
    <property type="entry name" value="HATPase_c"/>
    <property type="match status" value="1"/>
</dbReference>
<dbReference type="SMART" id="SM00388">
    <property type="entry name" value="HisKA"/>
    <property type="match status" value="1"/>
</dbReference>
<dbReference type="SUPFAM" id="SSF55874">
    <property type="entry name" value="ATPase domain of HSP90 chaperone/DNA topoisomerase II/histidine kinase"/>
    <property type="match status" value="1"/>
</dbReference>
<dbReference type="SUPFAM" id="SSF47384">
    <property type="entry name" value="Homodimeric domain of signal transducing histidine kinase"/>
    <property type="match status" value="1"/>
</dbReference>
<dbReference type="SUPFAM" id="SSF103190">
    <property type="entry name" value="Sensory domain-like"/>
    <property type="match status" value="1"/>
</dbReference>
<dbReference type="PROSITE" id="PS50109">
    <property type="entry name" value="HIS_KIN"/>
    <property type="match status" value="1"/>
</dbReference>